<accession>Q9A943</accession>
<evidence type="ECO:0000255" key="1">
    <source>
        <dbReference type="HAMAP-Rule" id="MF_01559"/>
    </source>
</evidence>
<sequence>MIVSSTTDFREAARRRLPRFLFDYIDGGAYAERTMARNIDDLADIALRQRVLMDVSVVDPSTTLFGVRQALPVALAPVGLTGMYARRGECQAARAAAAKGVPFCLSTVSVCDVDEVRAASATPFWFQLYVLRDRGFMRDLLARASAAGATTLVFTVDMPVPGARYRDAHSGMSGPNAAARRLVQAALKPAWAWDVGVMGHPHRLGNVAPALGKASGLQDFMGWLAANFDPSIQWSDLKWIRDAWKGPLVIKGVLDPEDAKAAADIGADGVVVSNHGGRQLDGVLSSARALPAIADAVGDRLTVLADGGVRSGLDVVRMLALGARGVLIGRAYAYALAARGEAGVTQLLDLIDKEMRVAMALTGVRDVASINETILAERVPRAG</sequence>
<organism>
    <name type="scientific">Caulobacter vibrioides (strain ATCC 19089 / CIP 103742 / CB 15)</name>
    <name type="common">Caulobacter crescentus</name>
    <dbReference type="NCBI Taxonomy" id="190650"/>
    <lineage>
        <taxon>Bacteria</taxon>
        <taxon>Pseudomonadati</taxon>
        <taxon>Pseudomonadota</taxon>
        <taxon>Alphaproteobacteria</taxon>
        <taxon>Caulobacterales</taxon>
        <taxon>Caulobacteraceae</taxon>
        <taxon>Caulobacter</taxon>
    </lineage>
</organism>
<protein>
    <recommendedName>
        <fullName evidence="1">L-lactate dehydrogenase</fullName>
        <ecNumber evidence="1">1.1.-.-</ecNumber>
    </recommendedName>
</protein>
<dbReference type="EC" id="1.1.-.-" evidence="1"/>
<dbReference type="EMBL" id="AE005673">
    <property type="protein sequence ID" value="AAK23135.1"/>
    <property type="molecule type" value="Genomic_DNA"/>
</dbReference>
<dbReference type="PIR" id="C87392">
    <property type="entry name" value="C87392"/>
</dbReference>
<dbReference type="RefSeq" id="NP_419967.1">
    <property type="nucleotide sequence ID" value="NC_002696.2"/>
</dbReference>
<dbReference type="RefSeq" id="WP_010919035.1">
    <property type="nucleotide sequence ID" value="NC_002696.2"/>
</dbReference>
<dbReference type="SMR" id="Q9A943"/>
<dbReference type="STRING" id="190650.CC_1151"/>
<dbReference type="EnsemblBacteria" id="AAK23135">
    <property type="protein sequence ID" value="AAK23135"/>
    <property type="gene ID" value="CC_1151"/>
</dbReference>
<dbReference type="KEGG" id="ccr:CC_1151"/>
<dbReference type="PATRIC" id="fig|190650.5.peg.1174"/>
<dbReference type="eggNOG" id="COG1304">
    <property type="taxonomic scope" value="Bacteria"/>
</dbReference>
<dbReference type="HOGENOM" id="CLU_020639_0_0_5"/>
<dbReference type="BioCyc" id="CAULO:CC1151-MONOMER"/>
<dbReference type="Proteomes" id="UP000001816">
    <property type="component" value="Chromosome"/>
</dbReference>
<dbReference type="GO" id="GO:0005886">
    <property type="term" value="C:plasma membrane"/>
    <property type="evidence" value="ECO:0007669"/>
    <property type="project" value="UniProtKB-SubCell"/>
</dbReference>
<dbReference type="GO" id="GO:0010181">
    <property type="term" value="F:FMN binding"/>
    <property type="evidence" value="ECO:0007669"/>
    <property type="project" value="InterPro"/>
</dbReference>
<dbReference type="GO" id="GO:0004459">
    <property type="term" value="F:L-lactate dehydrogenase activity"/>
    <property type="evidence" value="ECO:0007669"/>
    <property type="project" value="UniProtKB-UniRule"/>
</dbReference>
<dbReference type="GO" id="GO:0009060">
    <property type="term" value="P:aerobic respiration"/>
    <property type="evidence" value="ECO:0007669"/>
    <property type="project" value="TreeGrafter"/>
</dbReference>
<dbReference type="GO" id="GO:0006089">
    <property type="term" value="P:lactate metabolic process"/>
    <property type="evidence" value="ECO:0007669"/>
    <property type="project" value="UniProtKB-UniRule"/>
</dbReference>
<dbReference type="CDD" id="cd02809">
    <property type="entry name" value="alpha_hydroxyacid_oxid_FMN"/>
    <property type="match status" value="1"/>
</dbReference>
<dbReference type="FunFam" id="3.20.20.70:FF:000029">
    <property type="entry name" value="L-lactate dehydrogenase"/>
    <property type="match status" value="1"/>
</dbReference>
<dbReference type="Gene3D" id="3.20.20.70">
    <property type="entry name" value="Aldolase class I"/>
    <property type="match status" value="1"/>
</dbReference>
<dbReference type="HAMAP" id="MF_01559">
    <property type="entry name" value="L_lact_dehydr"/>
    <property type="match status" value="1"/>
</dbReference>
<dbReference type="InterPro" id="IPR013785">
    <property type="entry name" value="Aldolase_TIM"/>
</dbReference>
<dbReference type="InterPro" id="IPR012133">
    <property type="entry name" value="Alpha-hydoxy_acid_DH_FMN"/>
</dbReference>
<dbReference type="InterPro" id="IPR000262">
    <property type="entry name" value="FMN-dep_DH"/>
</dbReference>
<dbReference type="InterPro" id="IPR037396">
    <property type="entry name" value="FMN_HAD"/>
</dbReference>
<dbReference type="InterPro" id="IPR008259">
    <property type="entry name" value="FMN_hydac_DH_AS"/>
</dbReference>
<dbReference type="InterPro" id="IPR020920">
    <property type="entry name" value="LldD"/>
</dbReference>
<dbReference type="NCBIfam" id="NF033901">
    <property type="entry name" value="L_lactate_LldD"/>
    <property type="match status" value="1"/>
</dbReference>
<dbReference type="NCBIfam" id="NF008398">
    <property type="entry name" value="PRK11197.1"/>
    <property type="match status" value="1"/>
</dbReference>
<dbReference type="PANTHER" id="PTHR10578:SF85">
    <property type="entry name" value="L-LACTATE DEHYDROGENASE"/>
    <property type="match status" value="1"/>
</dbReference>
<dbReference type="PANTHER" id="PTHR10578">
    <property type="entry name" value="S -2-HYDROXY-ACID OXIDASE-RELATED"/>
    <property type="match status" value="1"/>
</dbReference>
<dbReference type="Pfam" id="PF01070">
    <property type="entry name" value="FMN_dh"/>
    <property type="match status" value="1"/>
</dbReference>
<dbReference type="PIRSF" id="PIRSF000138">
    <property type="entry name" value="Al-hdrx_acd_dh"/>
    <property type="match status" value="1"/>
</dbReference>
<dbReference type="SUPFAM" id="SSF51395">
    <property type="entry name" value="FMN-linked oxidoreductases"/>
    <property type="match status" value="1"/>
</dbReference>
<dbReference type="PROSITE" id="PS00557">
    <property type="entry name" value="FMN_HYDROXY_ACID_DH_1"/>
    <property type="match status" value="1"/>
</dbReference>
<dbReference type="PROSITE" id="PS51349">
    <property type="entry name" value="FMN_HYDROXY_ACID_DH_2"/>
    <property type="match status" value="1"/>
</dbReference>
<feature type="chain" id="PRO_0000206333" description="L-lactate dehydrogenase">
    <location>
        <begin position="1"/>
        <end position="383"/>
    </location>
</feature>
<feature type="domain" description="FMN hydroxy acid dehydrogenase" evidence="1">
    <location>
        <begin position="1"/>
        <end position="380"/>
    </location>
</feature>
<feature type="active site" description="Proton acceptor" evidence="1">
    <location>
        <position position="275"/>
    </location>
</feature>
<feature type="binding site" evidence="1">
    <location>
        <position position="24"/>
    </location>
    <ligand>
        <name>substrate</name>
    </ligand>
</feature>
<feature type="binding site" evidence="1">
    <location>
        <position position="106"/>
    </location>
    <ligand>
        <name>FMN</name>
        <dbReference type="ChEBI" id="CHEBI:58210"/>
    </ligand>
</feature>
<feature type="binding site" evidence="1">
    <location>
        <position position="127"/>
    </location>
    <ligand>
        <name>FMN</name>
        <dbReference type="ChEBI" id="CHEBI:58210"/>
    </ligand>
</feature>
<feature type="binding site" evidence="1">
    <location>
        <position position="129"/>
    </location>
    <ligand>
        <name>substrate</name>
    </ligand>
</feature>
<feature type="binding site" evidence="1">
    <location>
        <position position="155"/>
    </location>
    <ligand>
        <name>FMN</name>
        <dbReference type="ChEBI" id="CHEBI:58210"/>
    </ligand>
</feature>
<feature type="binding site" evidence="1">
    <location>
        <position position="164"/>
    </location>
    <ligand>
        <name>substrate</name>
    </ligand>
</feature>
<feature type="binding site" evidence="1">
    <location>
        <position position="251"/>
    </location>
    <ligand>
        <name>FMN</name>
        <dbReference type="ChEBI" id="CHEBI:58210"/>
    </ligand>
</feature>
<feature type="binding site" evidence="1">
    <location>
        <position position="278"/>
    </location>
    <ligand>
        <name>substrate</name>
    </ligand>
</feature>
<feature type="binding site" evidence="1">
    <location>
        <begin position="306"/>
        <end position="330"/>
    </location>
    <ligand>
        <name>FMN</name>
        <dbReference type="ChEBI" id="CHEBI:58210"/>
    </ligand>
</feature>
<keyword id="KW-0997">Cell inner membrane</keyword>
<keyword id="KW-1003">Cell membrane</keyword>
<keyword id="KW-0285">Flavoprotein</keyword>
<keyword id="KW-0288">FMN</keyword>
<keyword id="KW-0472">Membrane</keyword>
<keyword id="KW-0560">Oxidoreductase</keyword>
<keyword id="KW-1185">Reference proteome</keyword>
<gene>
    <name evidence="1" type="primary">lldD</name>
    <name type="ordered locus">CC_1151</name>
</gene>
<comment type="function">
    <text evidence="1">Catalyzes the conversion of L-lactate to pyruvate. Is coupled to the respiratory chain.</text>
</comment>
<comment type="catalytic activity">
    <reaction evidence="1">
        <text>(S)-lactate + A = pyruvate + AH2</text>
        <dbReference type="Rhea" id="RHEA:45816"/>
        <dbReference type="ChEBI" id="CHEBI:13193"/>
        <dbReference type="ChEBI" id="CHEBI:15361"/>
        <dbReference type="ChEBI" id="CHEBI:16651"/>
        <dbReference type="ChEBI" id="CHEBI:17499"/>
    </reaction>
</comment>
<comment type="cofactor">
    <cofactor evidence="1">
        <name>FMN</name>
        <dbReference type="ChEBI" id="CHEBI:58210"/>
    </cofactor>
</comment>
<comment type="subcellular location">
    <subcellularLocation>
        <location evidence="1">Cell inner membrane</location>
        <topology evidence="1">Peripheral membrane protein</topology>
    </subcellularLocation>
</comment>
<comment type="similarity">
    <text evidence="1">Belongs to the FMN-dependent alpha-hydroxy acid dehydrogenase family.</text>
</comment>
<proteinExistence type="inferred from homology"/>
<reference key="1">
    <citation type="journal article" date="2001" name="Proc. Natl. Acad. Sci. U.S.A.">
        <title>Complete genome sequence of Caulobacter crescentus.</title>
        <authorList>
            <person name="Nierman W.C."/>
            <person name="Feldblyum T.V."/>
            <person name="Laub M.T."/>
            <person name="Paulsen I.T."/>
            <person name="Nelson K.E."/>
            <person name="Eisen J.A."/>
            <person name="Heidelberg J.F."/>
            <person name="Alley M.R.K."/>
            <person name="Ohta N."/>
            <person name="Maddock J.R."/>
            <person name="Potocka I."/>
            <person name="Nelson W.C."/>
            <person name="Newton A."/>
            <person name="Stephens C."/>
            <person name="Phadke N.D."/>
            <person name="Ely B."/>
            <person name="DeBoy R.T."/>
            <person name="Dodson R.J."/>
            <person name="Durkin A.S."/>
            <person name="Gwinn M.L."/>
            <person name="Haft D.H."/>
            <person name="Kolonay J.F."/>
            <person name="Smit J."/>
            <person name="Craven M.B."/>
            <person name="Khouri H.M."/>
            <person name="Shetty J."/>
            <person name="Berry K.J."/>
            <person name="Utterback T.R."/>
            <person name="Tran K."/>
            <person name="Wolf A.M."/>
            <person name="Vamathevan J.J."/>
            <person name="Ermolaeva M.D."/>
            <person name="White O."/>
            <person name="Salzberg S.L."/>
            <person name="Venter J.C."/>
            <person name="Shapiro L."/>
            <person name="Fraser C.M."/>
        </authorList>
    </citation>
    <scope>NUCLEOTIDE SEQUENCE [LARGE SCALE GENOMIC DNA]</scope>
    <source>
        <strain>ATCC 19089 / CIP 103742 / CB 15</strain>
    </source>
</reference>
<name>LLDD_CAUVC</name>